<evidence type="ECO:0000255" key="1">
    <source>
        <dbReference type="HAMAP-Rule" id="MF_01382"/>
    </source>
</evidence>
<evidence type="ECO:0007829" key="2">
    <source>
        <dbReference type="PDB" id="4UAQ"/>
    </source>
</evidence>
<reference key="1">
    <citation type="journal article" date="1998" name="Nature">
        <title>Deciphering the biology of Mycobacterium tuberculosis from the complete genome sequence.</title>
        <authorList>
            <person name="Cole S.T."/>
            <person name="Brosch R."/>
            <person name="Parkhill J."/>
            <person name="Garnier T."/>
            <person name="Churcher C.M."/>
            <person name="Harris D.E."/>
            <person name="Gordon S.V."/>
            <person name="Eiglmeier K."/>
            <person name="Gas S."/>
            <person name="Barry C.E. III"/>
            <person name="Tekaia F."/>
            <person name="Badcock K."/>
            <person name="Basham D."/>
            <person name="Brown D."/>
            <person name="Chillingworth T."/>
            <person name="Connor R."/>
            <person name="Davies R.M."/>
            <person name="Devlin K."/>
            <person name="Feltwell T."/>
            <person name="Gentles S."/>
            <person name="Hamlin N."/>
            <person name="Holroyd S."/>
            <person name="Hornsby T."/>
            <person name="Jagels K."/>
            <person name="Krogh A."/>
            <person name="McLean J."/>
            <person name="Moule S."/>
            <person name="Murphy L.D."/>
            <person name="Oliver S."/>
            <person name="Osborne J."/>
            <person name="Quail M.A."/>
            <person name="Rajandream M.A."/>
            <person name="Rogers J."/>
            <person name="Rutter S."/>
            <person name="Seeger K."/>
            <person name="Skelton S."/>
            <person name="Squares S."/>
            <person name="Squares R."/>
            <person name="Sulston J.E."/>
            <person name="Taylor K."/>
            <person name="Whitehead S."/>
            <person name="Barrell B.G."/>
        </authorList>
    </citation>
    <scope>NUCLEOTIDE SEQUENCE [LARGE SCALE GENOMIC DNA]</scope>
    <source>
        <strain>ATCC 25618 / H37Rv</strain>
    </source>
</reference>
<reference key="2">
    <citation type="journal article" date="2011" name="Mol. Cell. Proteomics">
        <title>Proteogenomic analysis of Mycobacterium tuberculosis by high resolution mass spectrometry.</title>
        <authorList>
            <person name="Kelkar D.S."/>
            <person name="Kumar D."/>
            <person name="Kumar P."/>
            <person name="Balakrishnan L."/>
            <person name="Muthusamy B."/>
            <person name="Yadav A.K."/>
            <person name="Shrivastava P."/>
            <person name="Marimuthu A."/>
            <person name="Anand S."/>
            <person name="Sundaram H."/>
            <person name="Kingsbury R."/>
            <person name="Harsha H.C."/>
            <person name="Nair B."/>
            <person name="Prasad T.S."/>
            <person name="Chauhan D.S."/>
            <person name="Katoch K."/>
            <person name="Katoch V.M."/>
            <person name="Kumar P."/>
            <person name="Chaerkady R."/>
            <person name="Ramachandran S."/>
            <person name="Dash D."/>
            <person name="Pandey A."/>
        </authorList>
    </citation>
    <scope>IDENTIFICATION BY MASS SPECTROMETRY [LARGE SCALE ANALYSIS]</scope>
    <source>
        <strain>ATCC 25618 / H37Rv</strain>
    </source>
</reference>
<protein>
    <recommendedName>
        <fullName evidence="1">Protein translocase subunit SecA 2</fullName>
        <ecNumber evidence="1">7.4.2.8</ecNumber>
    </recommendedName>
</protein>
<dbReference type="EC" id="7.4.2.8" evidence="1"/>
<dbReference type="EMBL" id="AL123456">
    <property type="protein sequence ID" value="CCP44587.1"/>
    <property type="molecule type" value="Genomic_DNA"/>
</dbReference>
<dbReference type="PIR" id="F70720">
    <property type="entry name" value="F70720"/>
</dbReference>
<dbReference type="RefSeq" id="NP_216337.1">
    <property type="nucleotide sequence ID" value="NC_000962.3"/>
</dbReference>
<dbReference type="RefSeq" id="WP_003409221.1">
    <property type="nucleotide sequence ID" value="NC_000962.3"/>
</dbReference>
<dbReference type="PDB" id="4UAQ">
    <property type="method" value="X-ray"/>
    <property type="resolution" value="2.80 A"/>
    <property type="chains" value="A=31-808"/>
</dbReference>
<dbReference type="PDBsum" id="4UAQ"/>
<dbReference type="SMR" id="P9WGP3"/>
<dbReference type="FunCoup" id="P9WGP3">
    <property type="interactions" value="23"/>
</dbReference>
<dbReference type="STRING" id="83332.Rv1821"/>
<dbReference type="PaxDb" id="83332-Rv1821"/>
<dbReference type="GeneID" id="885594"/>
<dbReference type="KEGG" id="mtu:Rv1821"/>
<dbReference type="KEGG" id="mtv:RVBD_1821"/>
<dbReference type="PATRIC" id="fig|83332.111.peg.2027"/>
<dbReference type="TubercuList" id="Rv1821"/>
<dbReference type="eggNOG" id="COG0653">
    <property type="taxonomic scope" value="Bacteria"/>
</dbReference>
<dbReference type="InParanoid" id="P9WGP3"/>
<dbReference type="OrthoDB" id="9805579at2"/>
<dbReference type="PhylomeDB" id="P9WGP3"/>
<dbReference type="BRENDA" id="7.4.2.5">
    <property type="organism ID" value="3445"/>
</dbReference>
<dbReference type="Reactome" id="R-HSA-1222387">
    <property type="pathway name" value="Tolerance of reactive oxygen produced by macrophages"/>
</dbReference>
<dbReference type="Reactome" id="R-HSA-9636383">
    <property type="pathway name" value="Prevention of phagosomal-lysosomal fusion"/>
</dbReference>
<dbReference type="EvolutionaryTrace" id="P9WGP3"/>
<dbReference type="Proteomes" id="UP000001584">
    <property type="component" value="Chromosome"/>
</dbReference>
<dbReference type="GO" id="GO:0031522">
    <property type="term" value="C:cell envelope Sec protein transport complex"/>
    <property type="evidence" value="ECO:0000318"/>
    <property type="project" value="GO_Central"/>
</dbReference>
<dbReference type="GO" id="GO:0005829">
    <property type="term" value="C:cytosol"/>
    <property type="evidence" value="ECO:0000304"/>
    <property type="project" value="Reactome"/>
</dbReference>
<dbReference type="GO" id="GO:0009274">
    <property type="term" value="C:peptidoglycan-based cell wall"/>
    <property type="evidence" value="ECO:0007005"/>
    <property type="project" value="MTBBASE"/>
</dbReference>
<dbReference type="GO" id="GO:0005886">
    <property type="term" value="C:plasma membrane"/>
    <property type="evidence" value="ECO:0007005"/>
    <property type="project" value="MTBBASE"/>
</dbReference>
<dbReference type="GO" id="GO:0005524">
    <property type="term" value="F:ATP binding"/>
    <property type="evidence" value="ECO:0000318"/>
    <property type="project" value="GO_Central"/>
</dbReference>
<dbReference type="GO" id="GO:0016887">
    <property type="term" value="F:ATP hydrolysis activity"/>
    <property type="evidence" value="ECO:0000314"/>
    <property type="project" value="MTBBASE"/>
</dbReference>
<dbReference type="GO" id="GO:0008320">
    <property type="term" value="F:protein transmembrane transporter activity"/>
    <property type="evidence" value="ECO:0000304"/>
    <property type="project" value="Reactome"/>
</dbReference>
<dbReference type="GO" id="GO:0008564">
    <property type="term" value="F:protein-exporting ATPase activity"/>
    <property type="evidence" value="ECO:0007669"/>
    <property type="project" value="UniProtKB-EC"/>
</dbReference>
<dbReference type="GO" id="GO:0051701">
    <property type="term" value="P:biological process involved in interaction with host"/>
    <property type="evidence" value="ECO:0000315"/>
    <property type="project" value="MTBBASE"/>
</dbReference>
<dbReference type="GO" id="GO:0065002">
    <property type="term" value="P:intracellular protein transmembrane transport"/>
    <property type="evidence" value="ECO:0007669"/>
    <property type="project" value="UniProtKB-UniRule"/>
</dbReference>
<dbReference type="GO" id="GO:0017038">
    <property type="term" value="P:protein import"/>
    <property type="evidence" value="ECO:0007669"/>
    <property type="project" value="InterPro"/>
</dbReference>
<dbReference type="GO" id="GO:0006605">
    <property type="term" value="P:protein targeting"/>
    <property type="evidence" value="ECO:0007669"/>
    <property type="project" value="UniProtKB-UniRule"/>
</dbReference>
<dbReference type="GO" id="GO:0043952">
    <property type="term" value="P:protein transport by the Sec complex"/>
    <property type="evidence" value="ECO:0000315"/>
    <property type="project" value="MTBBASE"/>
</dbReference>
<dbReference type="GO" id="GO:0052553">
    <property type="term" value="P:symbiont-mediated perturbation of host immune response"/>
    <property type="evidence" value="ECO:0000315"/>
    <property type="project" value="MTBBASE"/>
</dbReference>
<dbReference type="GO" id="GO:0052170">
    <property type="term" value="P:symbiont-mediated suppression of host innate immune response"/>
    <property type="evidence" value="ECO:0000315"/>
    <property type="project" value="MTBBASE"/>
</dbReference>
<dbReference type="CDD" id="cd17928">
    <property type="entry name" value="DEXDc_SecA"/>
    <property type="match status" value="1"/>
</dbReference>
<dbReference type="CDD" id="cd18803">
    <property type="entry name" value="SF2_C_secA"/>
    <property type="match status" value="1"/>
</dbReference>
<dbReference type="FunFam" id="3.40.50.300:FF:000429">
    <property type="entry name" value="Preprotein translocase subunit SecA"/>
    <property type="match status" value="1"/>
</dbReference>
<dbReference type="FunFam" id="1.10.3060.10:FF:000010">
    <property type="entry name" value="Protein translocase subunit SecA 2"/>
    <property type="match status" value="1"/>
</dbReference>
<dbReference type="Gene3D" id="1.10.3060.10">
    <property type="entry name" value="Helical scaffold and wing domains of SecA"/>
    <property type="match status" value="1"/>
</dbReference>
<dbReference type="Gene3D" id="3.40.50.300">
    <property type="entry name" value="P-loop containing nucleotide triphosphate hydrolases"/>
    <property type="match status" value="3"/>
</dbReference>
<dbReference type="Gene3D" id="3.90.1440.10">
    <property type="entry name" value="SecA, preprotein cross-linking domain"/>
    <property type="match status" value="1"/>
</dbReference>
<dbReference type="HAMAP" id="MF_01382">
    <property type="entry name" value="SecA"/>
    <property type="match status" value="1"/>
</dbReference>
<dbReference type="InterPro" id="IPR014001">
    <property type="entry name" value="Helicase_ATP-bd"/>
</dbReference>
<dbReference type="InterPro" id="IPR001650">
    <property type="entry name" value="Helicase_C-like"/>
</dbReference>
<dbReference type="InterPro" id="IPR027417">
    <property type="entry name" value="P-loop_NTPase"/>
</dbReference>
<dbReference type="InterPro" id="IPR000185">
    <property type="entry name" value="SecA"/>
</dbReference>
<dbReference type="InterPro" id="IPR026389">
    <property type="entry name" value="SecA_Actinobact-type"/>
</dbReference>
<dbReference type="InterPro" id="IPR020937">
    <property type="entry name" value="SecA_CS"/>
</dbReference>
<dbReference type="InterPro" id="IPR011115">
    <property type="entry name" value="SecA_DEAD"/>
</dbReference>
<dbReference type="InterPro" id="IPR014018">
    <property type="entry name" value="SecA_motor_DEAD"/>
</dbReference>
<dbReference type="InterPro" id="IPR011130">
    <property type="entry name" value="SecA_preprotein_X-link_dom"/>
</dbReference>
<dbReference type="InterPro" id="IPR044722">
    <property type="entry name" value="SecA_SF2_C"/>
</dbReference>
<dbReference type="InterPro" id="IPR011116">
    <property type="entry name" value="SecA_Wing/Scaffold"/>
</dbReference>
<dbReference type="InterPro" id="IPR036266">
    <property type="entry name" value="SecA_Wing/Scaffold_sf"/>
</dbReference>
<dbReference type="InterPro" id="IPR036670">
    <property type="entry name" value="SecA_X-link_sf"/>
</dbReference>
<dbReference type="NCBIfam" id="TIGR04221">
    <property type="entry name" value="SecA2_Mycobac"/>
    <property type="match status" value="1"/>
</dbReference>
<dbReference type="PANTHER" id="PTHR30612:SF0">
    <property type="entry name" value="CHLOROPLAST PROTEIN-TRANSPORTING ATPASE"/>
    <property type="match status" value="1"/>
</dbReference>
<dbReference type="PANTHER" id="PTHR30612">
    <property type="entry name" value="SECA INNER MEMBRANE COMPONENT OF SEC PROTEIN SECRETION SYSTEM"/>
    <property type="match status" value="1"/>
</dbReference>
<dbReference type="Pfam" id="PF21090">
    <property type="entry name" value="P-loop_SecA"/>
    <property type="match status" value="1"/>
</dbReference>
<dbReference type="Pfam" id="PF07517">
    <property type="entry name" value="SecA_DEAD"/>
    <property type="match status" value="1"/>
</dbReference>
<dbReference type="Pfam" id="PF01043">
    <property type="entry name" value="SecA_PP_bind"/>
    <property type="match status" value="1"/>
</dbReference>
<dbReference type="Pfam" id="PF07516">
    <property type="entry name" value="SecA_SW"/>
    <property type="match status" value="1"/>
</dbReference>
<dbReference type="PRINTS" id="PR00906">
    <property type="entry name" value="SECA"/>
</dbReference>
<dbReference type="SMART" id="SM00957">
    <property type="entry name" value="SecA_DEAD"/>
    <property type="match status" value="1"/>
</dbReference>
<dbReference type="SMART" id="SM00958">
    <property type="entry name" value="SecA_PP_bind"/>
    <property type="match status" value="1"/>
</dbReference>
<dbReference type="SUPFAM" id="SSF81886">
    <property type="entry name" value="Helical scaffold and wing domains of SecA"/>
    <property type="match status" value="1"/>
</dbReference>
<dbReference type="SUPFAM" id="SSF52540">
    <property type="entry name" value="P-loop containing nucleoside triphosphate hydrolases"/>
    <property type="match status" value="2"/>
</dbReference>
<dbReference type="SUPFAM" id="SSF81767">
    <property type="entry name" value="Pre-protein crosslinking domain of SecA"/>
    <property type="match status" value="1"/>
</dbReference>
<dbReference type="PROSITE" id="PS01312">
    <property type="entry name" value="SECA"/>
    <property type="match status" value="1"/>
</dbReference>
<dbReference type="PROSITE" id="PS51196">
    <property type="entry name" value="SECA_MOTOR_DEAD"/>
    <property type="match status" value="1"/>
</dbReference>
<sequence>MNVHGCPRIAACRCTDTHPRGRPAFAYRWFVPKTTRAQPGRLSSRFWRLLGASTEKNRSRSLADVTASAEYDKEAADLSDEKLRKAAGLLNLDDLAESADIPQFLAIAREAAERRTGLRPFDVQLLGALRMLAGDVIEMATGEGKTLAGAIAAAGYALAGRHVHVVTINDYLARRDAEWMGPLLDAMGLTVGWITADSTPDERRTAYDRDVTYASVNEIGFDVLRDQLVTDVNDLVSPNPDVALIDEADSVLVDEALVPLVLAGTTHRETPRLEIIRLVAELVGDKDADEYFATDSDNRNVHLTEHGARKVEKALGGIDLYSEEHVGTTLTEVNVALHAHVLLQRDVHYIVRDDAVHLINASRGRIAQLQRWPDGLQAAVEAKEGIETTETGEVLDTITVQALINRYATVCGMTGTALAAGEQLRQFYQLGVSPIPPNKPNIREDEADRVYITTAAKNDGIVEHITEVHQRGQPVLVGTRDVAESEELHERLVRRGVPAVVLNAKNDAEEARVIAEAGKYGAVTVSTQMAGRGTDIRLGGSDEADHDRVAELGGLHVVGTGRHHTERLDNQLRGRAGRQGDPGSSVFFSSWEDDVVAANLDHNKLPMATDENGRIVSPRTGSLLDHAQRVAEGRLLDVHANTWRYNQLIAQQRAIIVERRNTLLRTVTAREELAELAPKRYEELSDKVSEERLETICRQIMLYHLDRGWADHLAYLADIRESIHLRALGRQNPLDEFHRMAVDAFASLAADAIEAAQQTFETANVLDHEPGLDLSKLARPTSTWTYMVNDNPLSDDTLSALSLPGVFR</sequence>
<proteinExistence type="evidence at protein level"/>
<feature type="chain" id="PRO_0000109599" description="Protein translocase subunit SecA 2">
    <location>
        <begin position="1"/>
        <end position="808"/>
    </location>
</feature>
<feature type="binding site" evidence="1">
    <location>
        <position position="124"/>
    </location>
    <ligand>
        <name>ATP</name>
        <dbReference type="ChEBI" id="CHEBI:30616"/>
    </ligand>
</feature>
<feature type="binding site" evidence="1">
    <location>
        <begin position="142"/>
        <end position="146"/>
    </location>
    <ligand>
        <name>ATP</name>
        <dbReference type="ChEBI" id="CHEBI:30616"/>
    </ligand>
</feature>
<feature type="binding site" evidence="1">
    <location>
        <position position="535"/>
    </location>
    <ligand>
        <name>ATP</name>
        <dbReference type="ChEBI" id="CHEBI:30616"/>
    </ligand>
</feature>
<feature type="helix" evidence="2">
    <location>
        <begin position="59"/>
        <end position="67"/>
    </location>
</feature>
<feature type="helix" evidence="2">
    <location>
        <begin position="68"/>
        <end position="71"/>
    </location>
</feature>
<feature type="helix" evidence="2">
    <location>
        <begin position="72"/>
        <end position="77"/>
    </location>
</feature>
<feature type="helix" evidence="2">
    <location>
        <begin position="80"/>
        <end position="88"/>
    </location>
</feature>
<feature type="turn" evidence="2">
    <location>
        <begin position="93"/>
        <end position="97"/>
    </location>
</feature>
<feature type="helix" evidence="2">
    <location>
        <begin position="101"/>
        <end position="114"/>
    </location>
</feature>
<feature type="helix" evidence="2">
    <location>
        <begin position="122"/>
        <end position="132"/>
    </location>
</feature>
<feature type="strand" evidence="2">
    <location>
        <begin position="136"/>
        <end position="138"/>
    </location>
</feature>
<feature type="helix" evidence="2">
    <location>
        <begin position="145"/>
        <end position="158"/>
    </location>
</feature>
<feature type="strand" evidence="2">
    <location>
        <begin position="163"/>
        <end position="166"/>
    </location>
</feature>
<feature type="helix" evidence="2">
    <location>
        <begin position="170"/>
        <end position="185"/>
    </location>
</feature>
<feature type="turn" evidence="2">
    <location>
        <begin position="186"/>
        <end position="188"/>
    </location>
</feature>
<feature type="strand" evidence="2">
    <location>
        <begin position="191"/>
        <end position="194"/>
    </location>
</feature>
<feature type="helix" evidence="2">
    <location>
        <begin position="200"/>
        <end position="208"/>
    </location>
</feature>
<feature type="strand" evidence="2">
    <location>
        <begin position="209"/>
        <end position="214"/>
    </location>
</feature>
<feature type="helix" evidence="2">
    <location>
        <begin position="216"/>
        <end position="225"/>
    </location>
</feature>
<feature type="helix" evidence="2">
    <location>
        <begin position="226"/>
        <end position="228"/>
    </location>
</feature>
<feature type="helix" evidence="2">
    <location>
        <begin position="232"/>
        <end position="234"/>
    </location>
</feature>
<feature type="strand" evidence="2">
    <location>
        <begin position="242"/>
        <end position="246"/>
    </location>
</feature>
<feature type="helix" evidence="2">
    <location>
        <begin position="248"/>
        <end position="253"/>
    </location>
</feature>
<feature type="strand" evidence="2">
    <location>
        <begin position="259"/>
        <end position="265"/>
    </location>
</feature>
<feature type="helix" evidence="2">
    <location>
        <begin position="273"/>
        <end position="284"/>
    </location>
</feature>
<feature type="strand" evidence="2">
    <location>
        <begin position="289"/>
        <end position="291"/>
    </location>
</feature>
<feature type="strand" evidence="2">
    <location>
        <begin position="294"/>
        <end position="296"/>
    </location>
</feature>
<feature type="helix" evidence="2">
    <location>
        <begin position="305"/>
        <end position="314"/>
    </location>
</feature>
<feature type="helix" evidence="2">
    <location>
        <begin position="323"/>
        <end position="326"/>
    </location>
</feature>
<feature type="helix" evidence="2">
    <location>
        <begin position="329"/>
        <end position="341"/>
    </location>
</feature>
<feature type="turn" evidence="2">
    <location>
        <begin position="345"/>
        <end position="348"/>
    </location>
</feature>
<feature type="turn" evidence="2">
    <location>
        <begin position="352"/>
        <end position="354"/>
    </location>
</feature>
<feature type="helix" evidence="2">
    <location>
        <begin position="376"/>
        <end position="381"/>
    </location>
</feature>
<feature type="strand" evidence="2">
    <location>
        <begin position="392"/>
        <end position="399"/>
    </location>
</feature>
<feature type="helix" evidence="2">
    <location>
        <begin position="400"/>
        <end position="404"/>
    </location>
</feature>
<feature type="strand" evidence="2">
    <location>
        <begin position="407"/>
        <end position="416"/>
    </location>
</feature>
<feature type="helix" evidence="2">
    <location>
        <begin position="418"/>
        <end position="420"/>
    </location>
</feature>
<feature type="helix" evidence="2">
    <location>
        <begin position="421"/>
        <end position="428"/>
    </location>
</feature>
<feature type="strand" evidence="2">
    <location>
        <begin position="432"/>
        <end position="434"/>
    </location>
</feature>
<feature type="strand" evidence="2">
    <location>
        <begin position="443"/>
        <end position="445"/>
    </location>
</feature>
<feature type="strand" evidence="2">
    <location>
        <begin position="449"/>
        <end position="453"/>
    </location>
</feature>
<feature type="helix" evidence="2">
    <location>
        <begin position="454"/>
        <end position="470"/>
    </location>
</feature>
<feature type="strand" evidence="2">
    <location>
        <begin position="475"/>
        <end position="480"/>
    </location>
</feature>
<feature type="helix" evidence="2">
    <location>
        <begin position="482"/>
        <end position="495"/>
    </location>
</feature>
<feature type="helix" evidence="2">
    <location>
        <begin position="507"/>
        <end position="514"/>
    </location>
</feature>
<feature type="turn" evidence="2">
    <location>
        <begin position="515"/>
        <end position="517"/>
    </location>
</feature>
<feature type="strand" evidence="2">
    <location>
        <begin position="523"/>
        <end position="531"/>
    </location>
</feature>
<feature type="turn" evidence="2">
    <location>
        <begin position="539"/>
        <end position="542"/>
    </location>
</feature>
<feature type="helix" evidence="2">
    <location>
        <begin position="546"/>
        <end position="551"/>
    </location>
</feature>
<feature type="strand" evidence="2">
    <location>
        <begin position="554"/>
        <end position="561"/>
    </location>
</feature>
<feature type="helix" evidence="2">
    <location>
        <begin position="566"/>
        <end position="574"/>
    </location>
</feature>
<feature type="helix" evidence="2">
    <location>
        <begin position="578"/>
        <end position="580"/>
    </location>
</feature>
<feature type="strand" evidence="2">
    <location>
        <begin position="583"/>
        <end position="590"/>
    </location>
</feature>
<feature type="turn" evidence="2">
    <location>
        <begin position="594"/>
        <end position="596"/>
    </location>
</feature>
<feature type="strand" evidence="2">
    <location>
        <begin position="597"/>
        <end position="600"/>
    </location>
</feature>
<feature type="helix" evidence="2">
    <location>
        <begin position="602"/>
        <end position="604"/>
    </location>
</feature>
<feature type="helix" evidence="2">
    <location>
        <begin position="621"/>
        <end position="662"/>
    </location>
</feature>
<feature type="turn" evidence="2">
    <location>
        <begin position="663"/>
        <end position="666"/>
    </location>
</feature>
<feature type="helix" evidence="2">
    <location>
        <begin position="668"/>
        <end position="672"/>
    </location>
</feature>
<feature type="turn" evidence="2">
    <location>
        <begin position="678"/>
        <end position="685"/>
    </location>
</feature>
<feature type="helix" evidence="2">
    <location>
        <begin position="690"/>
        <end position="724"/>
    </location>
</feature>
<feature type="helix" evidence="2">
    <location>
        <begin position="725"/>
        <end position="727"/>
    </location>
</feature>
<feature type="helix" evidence="2">
    <location>
        <begin position="736"/>
        <end position="746"/>
    </location>
</feature>
<feature type="helix" evidence="2">
    <location>
        <begin position="749"/>
        <end position="760"/>
    </location>
</feature>
<feature type="strand" evidence="2">
    <location>
        <begin position="782"/>
        <end position="787"/>
    </location>
</feature>
<comment type="function">
    <text evidence="1">Part of the Sec protein translocase complex. Interacts with the SecYEG preprotein conducting channel. Has a central role in coupling the hydrolysis of ATP to the transfer of proteins into and across the cell membrane, serving as an ATP-driven molecular motor driving the stepwise translocation of polypeptide chains across the membrane.</text>
</comment>
<comment type="catalytic activity">
    <reaction evidence="1">
        <text>ATP + H2O + cellular proteinSide 1 = ADP + phosphate + cellular proteinSide 2.</text>
        <dbReference type="EC" id="7.4.2.8"/>
    </reaction>
</comment>
<comment type="subunit">
    <text evidence="1">Monomer and homodimer. Part of the essential Sec protein translocation apparatus which comprises SecA, SecYEG and auxiliary proteins SecDF. Other proteins may also be involved.</text>
</comment>
<comment type="subcellular location">
    <subcellularLocation>
        <location evidence="1">Cell membrane</location>
        <topology evidence="1">Peripheral membrane protein</topology>
        <orientation evidence="1">Cytoplasmic side</orientation>
    </subcellularLocation>
    <subcellularLocation>
        <location evidence="1">Cytoplasm</location>
    </subcellularLocation>
    <text evidence="1">Distribution is 50-50.</text>
</comment>
<comment type="similarity">
    <text evidence="1">Belongs to the SecA family.</text>
</comment>
<accession>P9WGP3</accession>
<accession>L0T7S9</accession>
<accession>P66785</accession>
<accession>Q50612</accession>
<organism>
    <name type="scientific">Mycobacterium tuberculosis (strain ATCC 25618 / H37Rv)</name>
    <dbReference type="NCBI Taxonomy" id="83332"/>
    <lineage>
        <taxon>Bacteria</taxon>
        <taxon>Bacillati</taxon>
        <taxon>Actinomycetota</taxon>
        <taxon>Actinomycetes</taxon>
        <taxon>Mycobacteriales</taxon>
        <taxon>Mycobacteriaceae</taxon>
        <taxon>Mycobacterium</taxon>
        <taxon>Mycobacterium tuberculosis complex</taxon>
    </lineage>
</organism>
<gene>
    <name evidence="1" type="primary">secA2</name>
    <name type="ordered locus">Rv1821</name>
    <name type="ORF">MTCY1A11.22c</name>
</gene>
<name>SECA2_MYCTU</name>
<keyword id="KW-0002">3D-structure</keyword>
<keyword id="KW-0067">ATP-binding</keyword>
<keyword id="KW-1003">Cell membrane</keyword>
<keyword id="KW-0963">Cytoplasm</keyword>
<keyword id="KW-0472">Membrane</keyword>
<keyword id="KW-0547">Nucleotide-binding</keyword>
<keyword id="KW-0653">Protein transport</keyword>
<keyword id="KW-1185">Reference proteome</keyword>
<keyword id="KW-1278">Translocase</keyword>
<keyword id="KW-0811">Translocation</keyword>
<keyword id="KW-0813">Transport</keyword>